<protein>
    <recommendedName>
        <fullName>Neuropeptide S receptor</fullName>
    </recommendedName>
    <alternativeName>
        <fullName>G-protein coupled receptor 154</fullName>
    </alternativeName>
    <alternativeName>
        <fullName>G-protein coupled receptor PGR14</fullName>
    </alternativeName>
    <alternativeName>
        <fullName>G-protein coupled receptor for asthma susceptibility</fullName>
    </alternativeName>
</protein>
<keyword id="KW-0025">Alternative splicing</keyword>
<keyword id="KW-1058">Asthma</keyword>
<keyword id="KW-1003">Cell membrane</keyword>
<keyword id="KW-0963">Cytoplasm</keyword>
<keyword id="KW-1015">Disulfide bond</keyword>
<keyword id="KW-0297">G-protein coupled receptor</keyword>
<keyword id="KW-0325">Glycoprotein</keyword>
<keyword id="KW-0472">Membrane</keyword>
<keyword id="KW-0675">Receptor</keyword>
<keyword id="KW-1185">Reference proteome</keyword>
<keyword id="KW-0807">Transducer</keyword>
<keyword id="KW-0812">Transmembrane</keyword>
<keyword id="KW-1133">Transmembrane helix</keyword>
<organism>
    <name type="scientific">Homo sapiens</name>
    <name type="common">Human</name>
    <dbReference type="NCBI Taxonomy" id="9606"/>
    <lineage>
        <taxon>Eukaryota</taxon>
        <taxon>Metazoa</taxon>
        <taxon>Chordata</taxon>
        <taxon>Craniata</taxon>
        <taxon>Vertebrata</taxon>
        <taxon>Euteleostomi</taxon>
        <taxon>Mammalia</taxon>
        <taxon>Eutheria</taxon>
        <taxon>Euarchontoglires</taxon>
        <taxon>Primates</taxon>
        <taxon>Haplorrhini</taxon>
        <taxon>Catarrhini</taxon>
        <taxon>Hominidae</taxon>
        <taxon>Homo</taxon>
    </lineage>
</organism>
<dbReference type="EMBL" id="AY310326">
    <property type="protein sequence ID" value="AAQ76966.1"/>
    <property type="molecule type" value="mRNA"/>
</dbReference>
<dbReference type="EMBL" id="AY310327">
    <property type="protein sequence ID" value="AAQ76967.1"/>
    <property type="molecule type" value="mRNA"/>
</dbReference>
<dbReference type="EMBL" id="AY310328">
    <property type="protein sequence ID" value="AAQ76968.1"/>
    <property type="molecule type" value="mRNA"/>
</dbReference>
<dbReference type="EMBL" id="AY310329">
    <property type="protein sequence ID" value="AAQ76969.1"/>
    <property type="molecule type" value="mRNA"/>
</dbReference>
<dbReference type="EMBL" id="AY310330">
    <property type="protein sequence ID" value="AAQ76970.1"/>
    <property type="molecule type" value="mRNA"/>
</dbReference>
<dbReference type="EMBL" id="AY310331">
    <property type="protein sequence ID" value="AAQ76971.1"/>
    <property type="molecule type" value="mRNA"/>
</dbReference>
<dbReference type="EMBL" id="AY310332">
    <property type="protein sequence ID" value="AAQ76972.1"/>
    <property type="molecule type" value="mRNA"/>
</dbReference>
<dbReference type="EMBL" id="AY956446">
    <property type="protein sequence ID" value="AAX63744.1"/>
    <property type="molecule type" value="mRNA"/>
</dbReference>
<dbReference type="EMBL" id="AY956447">
    <property type="protein sequence ID" value="AAX63745.1"/>
    <property type="molecule type" value="mRNA"/>
</dbReference>
<dbReference type="EMBL" id="AY956448">
    <property type="protein sequence ID" value="AAX63746.1"/>
    <property type="molecule type" value="mRNA"/>
</dbReference>
<dbReference type="EMBL" id="AK172847">
    <property type="protein sequence ID" value="BAD18811.1"/>
    <property type="molecule type" value="mRNA"/>
</dbReference>
<dbReference type="EMBL" id="DQ272236">
    <property type="protein sequence ID" value="ABB72550.1"/>
    <property type="molecule type" value="Genomic_DNA"/>
</dbReference>
<dbReference type="EMBL" id="CH471073">
    <property type="protein sequence ID" value="EAW94036.1"/>
    <property type="molecule type" value="Genomic_DNA"/>
</dbReference>
<dbReference type="EMBL" id="BC132693">
    <property type="protein sequence ID" value="AAI32694.1"/>
    <property type="molecule type" value="mRNA"/>
</dbReference>
<dbReference type="EMBL" id="BC132695">
    <property type="protein sequence ID" value="AAI32696.1"/>
    <property type="molecule type" value="mRNA"/>
</dbReference>
<dbReference type="CCDS" id="CCDS5443.1">
    <molecule id="Q6W5P4-4"/>
</dbReference>
<dbReference type="CCDS" id="CCDS5444.1">
    <molecule id="Q6W5P4-1"/>
</dbReference>
<dbReference type="CCDS" id="CCDS75579.1">
    <molecule id="Q6W5P4-3"/>
</dbReference>
<dbReference type="CCDS" id="CCDS75580.1">
    <molecule id="Q6W5P4-5"/>
</dbReference>
<dbReference type="CCDS" id="CCDS75581.1">
    <molecule id="Q6W5P4-2"/>
</dbReference>
<dbReference type="RefSeq" id="NP_001287862.1">
    <molecule id="Q6W5P4-5"/>
    <property type="nucleotide sequence ID" value="NM_001300933.2"/>
</dbReference>
<dbReference type="RefSeq" id="NP_001287863.1">
    <molecule id="Q6W5P4-2"/>
    <property type="nucleotide sequence ID" value="NM_001300934.2"/>
</dbReference>
<dbReference type="RefSeq" id="NP_001287864.1">
    <molecule id="Q6W5P4-3"/>
    <property type="nucleotide sequence ID" value="NM_001300935.2"/>
</dbReference>
<dbReference type="RefSeq" id="NP_997055.1">
    <molecule id="Q6W5P4-1"/>
    <property type="nucleotide sequence ID" value="NM_207172.2"/>
</dbReference>
<dbReference type="RefSeq" id="NP_997056.1">
    <molecule id="Q6W5P4-4"/>
    <property type="nucleotide sequence ID" value="NM_207173.2"/>
</dbReference>
<dbReference type="SMR" id="Q6W5P4"/>
<dbReference type="BioGRID" id="132263">
    <property type="interactions" value="38"/>
</dbReference>
<dbReference type="FunCoup" id="Q6W5P4">
    <property type="interactions" value="513"/>
</dbReference>
<dbReference type="IntAct" id="Q6W5P4">
    <property type="interactions" value="34"/>
</dbReference>
<dbReference type="MINT" id="Q6W5P4"/>
<dbReference type="STRING" id="9606.ENSP00000370950"/>
<dbReference type="BindingDB" id="Q6W5P4"/>
<dbReference type="ChEMBL" id="CHEMBL5162"/>
<dbReference type="DrugBank" id="DB01159">
    <property type="generic name" value="Halothane"/>
</dbReference>
<dbReference type="GuidetoPHARMACOLOGY" id="302"/>
<dbReference type="TCDB" id="9.A.14.10.5">
    <property type="family name" value="the g-protein-coupled receptor (gpcr) family"/>
</dbReference>
<dbReference type="GlyCosmos" id="Q6W5P4">
    <property type="glycosylation" value="1 site, No reported glycans"/>
</dbReference>
<dbReference type="GlyGen" id="Q6W5P4">
    <property type="glycosylation" value="1 site"/>
</dbReference>
<dbReference type="iPTMnet" id="Q6W5P4"/>
<dbReference type="PhosphoSitePlus" id="Q6W5P4"/>
<dbReference type="BioMuta" id="NPSR1"/>
<dbReference type="DMDM" id="74758626"/>
<dbReference type="jPOST" id="Q6W5P4"/>
<dbReference type="MassIVE" id="Q6W5P4"/>
<dbReference type="PaxDb" id="9606-ENSP00000370950"/>
<dbReference type="PeptideAtlas" id="Q6W5P4"/>
<dbReference type="ProteomicsDB" id="67746">
    <molecule id="Q6W5P4-2"/>
</dbReference>
<dbReference type="Antibodypedia" id="1941">
    <property type="antibodies" value="188 antibodies from 27 providers"/>
</dbReference>
<dbReference type="DNASU" id="387129"/>
<dbReference type="Ensembl" id="ENST00000359791.5">
    <molecule id="Q6W5P4-4"/>
    <property type="protein sequence ID" value="ENSP00000352839.1"/>
    <property type="gene ID" value="ENSG00000187258.14"/>
</dbReference>
<dbReference type="Ensembl" id="ENST00000360581.6">
    <molecule id="Q6W5P4-1"/>
    <property type="protein sequence ID" value="ENSP00000353788.1"/>
    <property type="gene ID" value="ENSG00000187258.14"/>
</dbReference>
<dbReference type="Ensembl" id="ENST00000381539.3">
    <molecule id="Q6W5P4-3"/>
    <property type="protein sequence ID" value="ENSP00000370950.3"/>
    <property type="gene ID" value="ENSG00000187258.14"/>
</dbReference>
<dbReference type="Ensembl" id="ENST00000381542.5">
    <molecule id="Q6W5P4-2"/>
    <property type="protein sequence ID" value="ENSP00000370953.1"/>
    <property type="gene ID" value="ENSG00000187258.14"/>
</dbReference>
<dbReference type="Ensembl" id="ENST00000381544.6">
    <molecule id="Q6W5P4-6"/>
    <property type="protein sequence ID" value="ENSP00000370955.2"/>
    <property type="gene ID" value="ENSG00000187258.14"/>
</dbReference>
<dbReference type="Ensembl" id="ENST00000381553.7">
    <molecule id="Q6W5P4-8"/>
    <property type="protein sequence ID" value="ENSP00000370965.3"/>
    <property type="gene ID" value="ENSG00000187258.14"/>
</dbReference>
<dbReference type="Ensembl" id="ENST00000396095.6">
    <molecule id="Q6W5P4-7"/>
    <property type="protein sequence ID" value="ENSP00000379402.2"/>
    <property type="gene ID" value="ENSG00000187258.14"/>
</dbReference>
<dbReference type="Ensembl" id="ENST00000465305.5">
    <molecule id="Q6W5P4-9"/>
    <property type="protein sequence ID" value="ENSP00000434955.1"/>
    <property type="gene ID" value="ENSG00000187258.14"/>
</dbReference>
<dbReference type="Ensembl" id="ENST00000531252.5">
    <molecule id="Q6W5P4-5"/>
    <property type="protein sequence ID" value="ENSP00000433258.1"/>
    <property type="gene ID" value="ENSG00000187258.14"/>
</dbReference>
<dbReference type="GeneID" id="387129"/>
<dbReference type="KEGG" id="hsa:387129"/>
<dbReference type="MANE-Select" id="ENST00000360581.6">
    <property type="protein sequence ID" value="ENSP00000353788.1"/>
    <property type="RefSeq nucleotide sequence ID" value="NM_207172.2"/>
    <property type="RefSeq protein sequence ID" value="NP_997055.1"/>
</dbReference>
<dbReference type="UCSC" id="uc003teg.1">
    <molecule id="Q6W5P4-1"/>
    <property type="organism name" value="human"/>
</dbReference>
<dbReference type="AGR" id="HGNC:23631"/>
<dbReference type="CTD" id="387129"/>
<dbReference type="DisGeNET" id="387129"/>
<dbReference type="GeneCards" id="NPSR1"/>
<dbReference type="HGNC" id="HGNC:23631">
    <property type="gene designation" value="NPSR1"/>
</dbReference>
<dbReference type="HPA" id="ENSG00000187258">
    <property type="expression patterns" value="Not detected"/>
</dbReference>
<dbReference type="MalaCards" id="NPSR1"/>
<dbReference type="MIM" id="608584">
    <property type="type" value="phenotype"/>
</dbReference>
<dbReference type="MIM" id="608595">
    <property type="type" value="gene"/>
</dbReference>
<dbReference type="neXtProt" id="NX_Q6W5P4"/>
<dbReference type="OpenTargets" id="ENSG00000187258"/>
<dbReference type="PharmGKB" id="PA134951416"/>
<dbReference type="VEuPathDB" id="HostDB:ENSG00000187258"/>
<dbReference type="eggNOG" id="KOG3184">
    <property type="taxonomic scope" value="Eukaryota"/>
</dbReference>
<dbReference type="eggNOG" id="KOG3656">
    <property type="taxonomic scope" value="Eukaryota"/>
</dbReference>
<dbReference type="GeneTree" id="ENSGT00940000155094"/>
<dbReference type="HOGENOM" id="CLU_2385563_0_0_1"/>
<dbReference type="InParanoid" id="Q6W5P4"/>
<dbReference type="OMA" id="NRLCPPF"/>
<dbReference type="OrthoDB" id="5987909at2759"/>
<dbReference type="PAN-GO" id="Q6W5P4">
    <property type="GO annotations" value="5 GO annotations based on evolutionary models"/>
</dbReference>
<dbReference type="PhylomeDB" id="Q6W5P4"/>
<dbReference type="TreeFam" id="TF106499"/>
<dbReference type="PathwayCommons" id="Q6W5P4"/>
<dbReference type="Reactome" id="R-HSA-375276">
    <property type="pathway name" value="Peptide ligand-binding receptors"/>
</dbReference>
<dbReference type="Reactome" id="R-HSA-416476">
    <property type="pathway name" value="G alpha (q) signalling events"/>
</dbReference>
<dbReference type="Reactome" id="R-HSA-418555">
    <property type="pathway name" value="G alpha (s) signalling events"/>
</dbReference>
<dbReference type="SignaLink" id="Q6W5P4"/>
<dbReference type="BioGRID-ORCS" id="387129">
    <property type="hits" value="13 hits in 1151 CRISPR screens"/>
</dbReference>
<dbReference type="ChiTaRS" id="NPSR1">
    <property type="organism name" value="human"/>
</dbReference>
<dbReference type="GeneWiki" id="Neuropeptide_S_receptor"/>
<dbReference type="GenomeRNAi" id="387129"/>
<dbReference type="Pharos" id="Q6W5P4">
    <property type="development level" value="Tchem"/>
</dbReference>
<dbReference type="PRO" id="PR:Q6W5P4"/>
<dbReference type="Proteomes" id="UP000005640">
    <property type="component" value="Chromosome 7"/>
</dbReference>
<dbReference type="RNAct" id="Q6W5P4">
    <property type="molecule type" value="protein"/>
</dbReference>
<dbReference type="Bgee" id="ENSG00000187258">
    <property type="expression patterns" value="Expressed in male germ line stem cell (sensu Vertebrata) in testis and 22 other cell types or tissues"/>
</dbReference>
<dbReference type="ExpressionAtlas" id="Q6W5P4">
    <property type="expression patterns" value="baseline and differential"/>
</dbReference>
<dbReference type="GO" id="GO:0005737">
    <property type="term" value="C:cytoplasm"/>
    <property type="evidence" value="ECO:0000314"/>
    <property type="project" value="UniProtKB"/>
</dbReference>
<dbReference type="GO" id="GO:0005886">
    <property type="term" value="C:plasma membrane"/>
    <property type="evidence" value="ECO:0000314"/>
    <property type="project" value="UniProtKB"/>
</dbReference>
<dbReference type="GO" id="GO:0008188">
    <property type="term" value="F:neuropeptide receptor activity"/>
    <property type="evidence" value="ECO:0000314"/>
    <property type="project" value="UniProtKB"/>
</dbReference>
<dbReference type="GO" id="GO:0005000">
    <property type="term" value="F:vasopressin receptor activity"/>
    <property type="evidence" value="ECO:0007669"/>
    <property type="project" value="InterPro"/>
</dbReference>
<dbReference type="GO" id="GO:0042755">
    <property type="term" value="P:eating behavior"/>
    <property type="evidence" value="ECO:0007669"/>
    <property type="project" value="Ensembl"/>
</dbReference>
<dbReference type="GO" id="GO:2000293">
    <property type="term" value="P:negative regulation of defecation"/>
    <property type="evidence" value="ECO:0007669"/>
    <property type="project" value="Ensembl"/>
</dbReference>
<dbReference type="GO" id="GO:1903999">
    <property type="term" value="P:negative regulation of eating behavior"/>
    <property type="evidence" value="ECO:0007669"/>
    <property type="project" value="Ensembl"/>
</dbReference>
<dbReference type="GO" id="GO:0007218">
    <property type="term" value="P:neuropeptide signaling pathway"/>
    <property type="evidence" value="ECO:0000314"/>
    <property type="project" value="UniProtKB"/>
</dbReference>
<dbReference type="GO" id="GO:0070374">
    <property type="term" value="P:positive regulation of ERK1 and ERK2 cascade"/>
    <property type="evidence" value="ECO:0007669"/>
    <property type="project" value="Ensembl"/>
</dbReference>
<dbReference type="GO" id="GO:0051281">
    <property type="term" value="P:positive regulation of release of sequestered calcium ion into cytosol"/>
    <property type="evidence" value="ECO:0000314"/>
    <property type="project" value="UniProtKB"/>
</dbReference>
<dbReference type="GO" id="GO:0060013">
    <property type="term" value="P:righting reflex"/>
    <property type="evidence" value="ECO:0007669"/>
    <property type="project" value="Ensembl"/>
</dbReference>
<dbReference type="CDD" id="cd15197">
    <property type="entry name" value="7tmA_NPSR"/>
    <property type="match status" value="1"/>
</dbReference>
<dbReference type="FunFam" id="1.20.1070.10:FF:000188">
    <property type="entry name" value="Neuropeptide S receptor"/>
    <property type="match status" value="1"/>
</dbReference>
<dbReference type="Gene3D" id="1.20.1070.10">
    <property type="entry name" value="Rhodopsin 7-helix transmembrane proteins"/>
    <property type="match status" value="1"/>
</dbReference>
<dbReference type="InterPro" id="IPR000276">
    <property type="entry name" value="GPCR_Rhodpsn"/>
</dbReference>
<dbReference type="InterPro" id="IPR017452">
    <property type="entry name" value="GPCR_Rhodpsn_7TM"/>
</dbReference>
<dbReference type="InterPro" id="IPR027294">
    <property type="entry name" value="NPS_rcpt"/>
</dbReference>
<dbReference type="InterPro" id="IPR001817">
    <property type="entry name" value="Vasoprsn_rcpt"/>
</dbReference>
<dbReference type="PANTHER" id="PTHR24244">
    <property type="entry name" value="NEUROPEPTIDE S RECEPTOR"/>
    <property type="match status" value="1"/>
</dbReference>
<dbReference type="PANTHER" id="PTHR24244:SF2">
    <property type="entry name" value="NEUROPEPTIDE S RECEPTOR"/>
    <property type="match status" value="1"/>
</dbReference>
<dbReference type="Pfam" id="PF00001">
    <property type="entry name" value="7tm_1"/>
    <property type="match status" value="1"/>
</dbReference>
<dbReference type="PRINTS" id="PR00237">
    <property type="entry name" value="GPCRRHODOPSN"/>
</dbReference>
<dbReference type="PRINTS" id="PR00896">
    <property type="entry name" value="VASOPRESSINR"/>
</dbReference>
<dbReference type="SUPFAM" id="SSF81321">
    <property type="entry name" value="Family A G protein-coupled receptor-like"/>
    <property type="match status" value="1"/>
</dbReference>
<dbReference type="PROSITE" id="PS00237">
    <property type="entry name" value="G_PROTEIN_RECEP_F1_1"/>
    <property type="match status" value="1"/>
</dbReference>
<dbReference type="PROSITE" id="PS50262">
    <property type="entry name" value="G_PROTEIN_RECEP_F1_2"/>
    <property type="match status" value="1"/>
</dbReference>
<name>NPSR1_HUMAN</name>
<sequence>MPANFTEGSFDSSGTGQTLDSSPVACTETVTFTEVVEGKEWGSFYYSFKTEQLITLWVLFVFTIVGNSVVLFSTWRRKKKSRMTFFVTQLAITDSFTGLVNILTDINWRFTGDFTAPDLVCRVVRYLQVVLLYASTYVLVSLSIDRYHAIVYPMKFLQGEKQARVLIVIAWSLSFLFSIPTLIIFGKRTLSNGEVQCWALWPDDSYWTPYMTIVAFLVYFIPLTIISIMYGIVIRTIWIKSKTYETVISNCSDGKLCSSYNRGLISKAKIKAIKYSIIIILAFICCWSPYFLFDILDNFNLLPDTQERFYASVIIQNLPALNSAINPLIYCVFSSSISFPCREQRSQDSRMTFRERTERHEMQILSKPEFI</sequence>
<evidence type="ECO:0000255" key="1"/>
<evidence type="ECO:0000255" key="2">
    <source>
        <dbReference type="PROSITE-ProRule" id="PRU00521"/>
    </source>
</evidence>
<evidence type="ECO:0000256" key="3">
    <source>
        <dbReference type="SAM" id="MobiDB-lite"/>
    </source>
</evidence>
<evidence type="ECO:0000269" key="4">
    <source>
    </source>
</evidence>
<evidence type="ECO:0000269" key="5">
    <source>
    </source>
</evidence>
<evidence type="ECO:0000269" key="6">
    <source>
    </source>
</evidence>
<evidence type="ECO:0000269" key="7">
    <source>
    </source>
</evidence>
<evidence type="ECO:0000269" key="8">
    <source>
    </source>
</evidence>
<evidence type="ECO:0000269" key="9">
    <source>
    </source>
</evidence>
<evidence type="ECO:0000269" key="10">
    <source>
    </source>
</evidence>
<evidence type="ECO:0000269" key="11">
    <source ref="3"/>
</evidence>
<evidence type="ECO:0000269" key="12">
    <source ref="5"/>
</evidence>
<evidence type="ECO:0000303" key="13">
    <source>
    </source>
</evidence>
<evidence type="ECO:0000303" key="14">
    <source>
    </source>
</evidence>
<evidence type="ECO:0000303" key="15">
    <source>
    </source>
</evidence>
<evidence type="ECO:0000303" key="16">
    <source>
    </source>
</evidence>
<evidence type="ECO:0000303" key="17">
    <source ref="3"/>
</evidence>
<evidence type="ECO:0000305" key="18"/>
<feature type="chain" id="PRO_0000069639" description="Neuropeptide S receptor">
    <location>
        <begin position="1"/>
        <end position="371"/>
    </location>
</feature>
<feature type="topological domain" description="Extracellular" evidence="1">
    <location>
        <begin position="1"/>
        <end position="52"/>
    </location>
</feature>
<feature type="transmembrane region" description="Helical; Name=1" evidence="1">
    <location>
        <begin position="53"/>
        <end position="73"/>
    </location>
</feature>
<feature type="topological domain" description="Cytoplasmic" evidence="1">
    <location>
        <begin position="74"/>
        <end position="82"/>
    </location>
</feature>
<feature type="transmembrane region" description="Helical; Name=2" evidence="1">
    <location>
        <begin position="83"/>
        <end position="103"/>
    </location>
</feature>
<feature type="topological domain" description="Extracellular" evidence="1">
    <location>
        <begin position="104"/>
        <end position="123"/>
    </location>
</feature>
<feature type="transmembrane region" description="Helical; Name=3" evidence="1">
    <location>
        <begin position="124"/>
        <end position="144"/>
    </location>
</feature>
<feature type="topological domain" description="Cytoplasmic" evidence="1">
    <location>
        <begin position="145"/>
        <end position="164"/>
    </location>
</feature>
<feature type="transmembrane region" description="Helical; Name=4" evidence="1">
    <location>
        <begin position="165"/>
        <end position="185"/>
    </location>
</feature>
<feature type="topological domain" description="Extracellular" evidence="1">
    <location>
        <begin position="186"/>
        <end position="212"/>
    </location>
</feature>
<feature type="transmembrane region" description="Helical; Name=5" evidence="1">
    <location>
        <begin position="213"/>
        <end position="233"/>
    </location>
</feature>
<feature type="topological domain" description="Cytoplasmic" evidence="1">
    <location>
        <begin position="234"/>
        <end position="275"/>
    </location>
</feature>
<feature type="transmembrane region" description="Helical; Name=6" evidence="1">
    <location>
        <begin position="276"/>
        <end position="296"/>
    </location>
</feature>
<feature type="topological domain" description="Extracellular" evidence="1">
    <location>
        <begin position="297"/>
        <end position="312"/>
    </location>
</feature>
<feature type="transmembrane region" description="Helical; Name=7" evidence="1">
    <location>
        <begin position="313"/>
        <end position="333"/>
    </location>
</feature>
<feature type="topological domain" description="Cytoplasmic" evidence="1">
    <location>
        <begin position="334"/>
        <end position="371"/>
    </location>
</feature>
<feature type="region of interest" description="Disordered" evidence="3">
    <location>
        <begin position="1"/>
        <end position="22"/>
    </location>
</feature>
<feature type="compositionally biased region" description="Polar residues" evidence="3">
    <location>
        <begin position="1"/>
        <end position="21"/>
    </location>
</feature>
<feature type="glycosylation site" description="N-linked (GlcNAc...) asparagine" evidence="1">
    <location>
        <position position="4"/>
    </location>
</feature>
<feature type="disulfide bond" evidence="2">
    <location>
        <begin position="121"/>
        <end position="197"/>
    </location>
</feature>
<feature type="splice variant" id="VSP_016078" description="In isoform 5." evidence="16">
    <location>
        <begin position="93"/>
        <end position="103"/>
    </location>
</feature>
<feature type="splice variant" id="VSP_016079" description="In isoform 2." evidence="16">
    <location>
        <begin position="94"/>
        <end position="159"/>
    </location>
</feature>
<feature type="splice variant" id="VSP_016080" description="In isoform 6." evidence="16">
    <original>DSFTGLVNILTDINWRFTGDFTAPDLVCRVVRYLQVVLLYASTYVLVSLSIDRYHAIVYPMKFLQ</original>
    <variation>GCAALRLYLRPGVPQHRQIPCHRLPHEVPSRRKASQGPHCDRLEPVFSVLHSHPDHIWEEDTVQR</variation>
    <location>
        <begin position="94"/>
        <end position="158"/>
    </location>
</feature>
<feature type="splice variant" id="VSP_016081" description="In isoform 9." evidence="16">
    <original>D</original>
    <variation>V</variation>
    <location>
        <position position="94"/>
    </location>
</feature>
<feature type="splice variant" id="VSP_016082" description="In isoform 9." evidence="16">
    <location>
        <begin position="95"/>
        <end position="371"/>
    </location>
</feature>
<feature type="splice variant" id="VSP_016083" description="In isoform 7." evidence="16">
    <original>VVLLYAST</original>
    <variation>KSKPGSSL</variation>
    <location>
        <begin position="129"/>
        <end position="136"/>
    </location>
</feature>
<feature type="splice variant" id="VSP_016084" description="In isoform 8." evidence="13">
    <original>VLLYASTYVLVSLS</original>
    <variation>MVMKLFHIQKMNME</variation>
    <location>
        <begin position="130"/>
        <end position="143"/>
    </location>
</feature>
<feature type="splice variant" id="VSP_016085" description="In isoform 7." evidence="16">
    <location>
        <begin position="137"/>
        <end position="371"/>
    </location>
</feature>
<feature type="splice variant" id="VSP_016086" description="In isoform 8." evidence="13">
    <location>
        <begin position="144"/>
        <end position="371"/>
    </location>
</feature>
<feature type="splice variant" id="VSP_016087" description="In isoform 6." evidence="16">
    <location>
        <begin position="159"/>
        <end position="371"/>
    </location>
</feature>
<feature type="splice variant" id="VSP_016088" description="In isoform 3." evidence="17">
    <original>EQRSQDSRMTFRERTERHEMQILSKPEFI</original>
    <variation>ANSSVYLLACDVSVLWALVLTSEKESCESWRRKGAKITGFQNDVPGEN</variation>
    <location>
        <begin position="343"/>
        <end position="371"/>
    </location>
</feature>
<feature type="splice variant" id="VSP_016089" description="In isoform 4 and isoform 5." evidence="14 15 16">
    <original>EQRSQDSRMTFRERTERHEMQILSKPEFI</original>
    <variation>VIRLRQLQEAALMLCPQRENWKGTWPGVPSWALPR</variation>
    <location>
        <begin position="343"/>
        <end position="371"/>
    </location>
</feature>
<feature type="sequence variant" id="VAR_023757" description="Increases cell surface expression and NPS-dependent calcium mobilization; does not affect affinity for NPS.; dbSNP:rs324981." evidence="4 5 10 11 12">
    <original>N</original>
    <variation>I</variation>
    <location>
        <position position="107"/>
    </location>
</feature>
<feature type="sequence variant" id="VAR_025103" description="In dbSNP:rs35436513." evidence="12">
    <original>R</original>
    <variation>Q</variation>
    <location>
        <position position="122"/>
    </location>
</feature>
<feature type="sequence variant" id="VAR_025104" description="In dbSNP:rs325465." evidence="12">
    <original>S</original>
    <variation>G</variation>
    <location>
        <position position="143"/>
    </location>
</feature>
<feature type="sequence variant" id="VAR_025105" description="In dbSNP:rs34705969." evidence="12">
    <original>C</original>
    <variation>F</variation>
    <location>
        <position position="197"/>
    </location>
</feature>
<feature type="sequence variant" id="VAR_025106" description="In dbSNP:rs35537374." evidence="12">
    <original>T</original>
    <variation>I</variation>
    <location>
        <position position="212"/>
    </location>
</feature>
<feature type="sequence variant" id="VAR_023758" description="In dbSNP:rs727162." evidence="12">
    <original>S</original>
    <variation>R</variation>
    <location>
        <position position="241"/>
    </location>
</feature>
<feature type="sequence variant" id="VAR_025107" description="In dbSNP:rs10270766." evidence="12">
    <original>I</original>
    <variation>T</variation>
    <location>
        <position position="315"/>
    </location>
</feature>
<feature type="sequence variant" id="VAR_023759" description="In dbSNP:rs6972158." evidence="12">
    <original>Q</original>
    <variation>R</variation>
    <location>
        <position position="344"/>
    </location>
</feature>
<reference key="1">
    <citation type="journal article" date="2004" name="Science">
        <title>Characterization of a common susceptibility locus for asthma-related traits.</title>
        <authorList>
            <person name="Laitinen T."/>
            <person name="Polvi A."/>
            <person name="Rydman P."/>
            <person name="Vendelin J."/>
            <person name="Pulkkinen V."/>
            <person name="Salmikangas P."/>
            <person name="Maekelae S."/>
            <person name="Rehn M."/>
            <person name="Pirskanen A."/>
            <person name="Rautanen A."/>
            <person name="Zucchelli M."/>
            <person name="Gullsten H."/>
            <person name="Leino M."/>
            <person name="Alenius H."/>
            <person name="Petaeys T."/>
            <person name="Haahtela T."/>
            <person name="Laitinen A."/>
            <person name="Laprise C."/>
            <person name="Hudson T.J."/>
            <person name="Laitinen L.A."/>
            <person name="Kere J."/>
        </authorList>
    </citation>
    <scope>NUCLEOTIDE SEQUENCE [MRNA] (ISOFORMS 1 AND 4)</scope>
    <scope>VARIANT ILE-107</scope>
    <scope>INVOLVEMENT IN ASRT2</scope>
    <scope>TISSUE SPECIFICITY</scope>
</reference>
<reference key="2">
    <citation type="journal article" date="2005" name="Am. J. Respir. Cell Mol. Biol.">
        <title>Characterization of GPRA, a novel G protein-coupled receptor related to asthma.</title>
        <authorList>
            <person name="Vendelin J."/>
            <person name="Pulkkinen V."/>
            <person name="Rehn M."/>
            <person name="Pirskanen A."/>
            <person name="Raisanen-Sokolowski A."/>
            <person name="Laitinen A."/>
            <person name="Laitinen L.A."/>
            <person name="Kere J."/>
            <person name="Laitinen T."/>
        </authorList>
    </citation>
    <scope>NUCLEOTIDE SEQUENCE [MRNA] (ISOFORMS 2; 5; 6; 7 AND 9)</scope>
    <scope>FUNCTION</scope>
    <scope>SUBCELLULAR LOCATION</scope>
    <scope>TISSUE SPECIFICITY</scope>
</reference>
<reference key="3">
    <citation type="submission" date="2005-03" db="EMBL/GenBank/DDBJ databases">
        <title>Human neuropeptide S receptor isoforms A and G: nucleotide and deduced amino acid sequence.</title>
        <authorList>
            <person name="Uebele V.N."/>
        </authorList>
    </citation>
    <scope>NUCLEOTIDE SEQUENCE [MRNA] (ISOFORMS 1 AND 3)</scope>
    <scope>VARIANT ILE-107</scope>
</reference>
<reference key="4">
    <citation type="journal article" date="2004" name="Nat. Genet.">
        <title>Complete sequencing and characterization of 21,243 full-length human cDNAs.</title>
        <authorList>
            <person name="Ota T."/>
            <person name="Suzuki Y."/>
            <person name="Nishikawa T."/>
            <person name="Otsuki T."/>
            <person name="Sugiyama T."/>
            <person name="Irie R."/>
            <person name="Wakamatsu A."/>
            <person name="Hayashi K."/>
            <person name="Sato H."/>
            <person name="Nagai K."/>
            <person name="Kimura K."/>
            <person name="Makita H."/>
            <person name="Sekine M."/>
            <person name="Obayashi M."/>
            <person name="Nishi T."/>
            <person name="Shibahara T."/>
            <person name="Tanaka T."/>
            <person name="Ishii S."/>
            <person name="Yamamoto J."/>
            <person name="Saito K."/>
            <person name="Kawai Y."/>
            <person name="Isono Y."/>
            <person name="Nakamura Y."/>
            <person name="Nagahari K."/>
            <person name="Murakami K."/>
            <person name="Yasuda T."/>
            <person name="Iwayanagi T."/>
            <person name="Wagatsuma M."/>
            <person name="Shiratori A."/>
            <person name="Sudo H."/>
            <person name="Hosoiri T."/>
            <person name="Kaku Y."/>
            <person name="Kodaira H."/>
            <person name="Kondo H."/>
            <person name="Sugawara M."/>
            <person name="Takahashi M."/>
            <person name="Kanda K."/>
            <person name="Yokoi T."/>
            <person name="Furuya T."/>
            <person name="Kikkawa E."/>
            <person name="Omura Y."/>
            <person name="Abe K."/>
            <person name="Kamihara K."/>
            <person name="Katsuta N."/>
            <person name="Sato K."/>
            <person name="Tanikawa M."/>
            <person name="Yamazaki M."/>
            <person name="Ninomiya K."/>
            <person name="Ishibashi T."/>
            <person name="Yamashita H."/>
            <person name="Murakawa K."/>
            <person name="Fujimori K."/>
            <person name="Tanai H."/>
            <person name="Kimata M."/>
            <person name="Watanabe M."/>
            <person name="Hiraoka S."/>
            <person name="Chiba Y."/>
            <person name="Ishida S."/>
            <person name="Ono Y."/>
            <person name="Takiguchi S."/>
            <person name="Watanabe S."/>
            <person name="Yosida M."/>
            <person name="Hotuta T."/>
            <person name="Kusano J."/>
            <person name="Kanehori K."/>
            <person name="Takahashi-Fujii A."/>
            <person name="Hara H."/>
            <person name="Tanase T.-O."/>
            <person name="Nomura Y."/>
            <person name="Togiya S."/>
            <person name="Komai F."/>
            <person name="Hara R."/>
            <person name="Takeuchi K."/>
            <person name="Arita M."/>
            <person name="Imose N."/>
            <person name="Musashino K."/>
            <person name="Yuuki H."/>
            <person name="Oshima A."/>
            <person name="Sasaki N."/>
            <person name="Aotsuka S."/>
            <person name="Yoshikawa Y."/>
            <person name="Matsunawa H."/>
            <person name="Ichihara T."/>
            <person name="Shiohata N."/>
            <person name="Sano S."/>
            <person name="Moriya S."/>
            <person name="Momiyama H."/>
            <person name="Satoh N."/>
            <person name="Takami S."/>
            <person name="Terashima Y."/>
            <person name="Suzuki O."/>
            <person name="Nakagawa S."/>
            <person name="Senoh A."/>
            <person name="Mizoguchi H."/>
            <person name="Goto Y."/>
            <person name="Shimizu F."/>
            <person name="Wakebe H."/>
            <person name="Hishigaki H."/>
            <person name="Watanabe T."/>
            <person name="Sugiyama A."/>
            <person name="Takemoto M."/>
            <person name="Kawakami B."/>
            <person name="Yamazaki M."/>
            <person name="Watanabe K."/>
            <person name="Kumagai A."/>
            <person name="Itakura S."/>
            <person name="Fukuzumi Y."/>
            <person name="Fujimori Y."/>
            <person name="Komiyama M."/>
            <person name="Tashiro H."/>
            <person name="Tanigami A."/>
            <person name="Fujiwara T."/>
            <person name="Ono T."/>
            <person name="Yamada K."/>
            <person name="Fujii Y."/>
            <person name="Ozaki K."/>
            <person name="Hirao M."/>
            <person name="Ohmori Y."/>
            <person name="Kawabata A."/>
            <person name="Hikiji T."/>
            <person name="Kobatake N."/>
            <person name="Inagaki H."/>
            <person name="Ikema Y."/>
            <person name="Okamoto S."/>
            <person name="Okitani R."/>
            <person name="Kawakami T."/>
            <person name="Noguchi S."/>
            <person name="Itoh T."/>
            <person name="Shigeta K."/>
            <person name="Senba T."/>
            <person name="Matsumura K."/>
            <person name="Nakajima Y."/>
            <person name="Mizuno T."/>
            <person name="Morinaga M."/>
            <person name="Sasaki M."/>
            <person name="Togashi T."/>
            <person name="Oyama M."/>
            <person name="Hata H."/>
            <person name="Watanabe M."/>
            <person name="Komatsu T."/>
            <person name="Mizushima-Sugano J."/>
            <person name="Satoh T."/>
            <person name="Shirai Y."/>
            <person name="Takahashi Y."/>
            <person name="Nakagawa K."/>
            <person name="Okumura K."/>
            <person name="Nagase T."/>
            <person name="Nomura N."/>
            <person name="Kikuchi H."/>
            <person name="Masuho Y."/>
            <person name="Yamashita R."/>
            <person name="Nakai K."/>
            <person name="Yada T."/>
            <person name="Nakamura Y."/>
            <person name="Ohara O."/>
            <person name="Isogai T."/>
            <person name="Sugano S."/>
        </authorList>
    </citation>
    <scope>NUCLEOTIDE SEQUENCE [LARGE SCALE MRNA] (ISOFORM 8)</scope>
    <scope>VARIANT ILE-107</scope>
</reference>
<reference key="5">
    <citation type="submission" date="2005-10" db="EMBL/GenBank/DDBJ databases">
        <authorList>
            <consortium name="SeattleSNPs variation discovery resource"/>
        </authorList>
    </citation>
    <scope>NUCLEOTIDE SEQUENCE [GENOMIC DNA]</scope>
    <scope>VARIANTS ILE-107; GLN-122; GLY-143; PHE-197; ILE-212; ARG-241; THR-315 AND ARG-344</scope>
</reference>
<reference key="6">
    <citation type="submission" date="2005-07" db="EMBL/GenBank/DDBJ databases">
        <authorList>
            <person name="Mural R.J."/>
            <person name="Istrail S."/>
            <person name="Sutton G.G."/>
            <person name="Florea L."/>
            <person name="Halpern A.L."/>
            <person name="Mobarry C.M."/>
            <person name="Lippert R."/>
            <person name="Walenz B."/>
            <person name="Shatkay H."/>
            <person name="Dew I."/>
            <person name="Miller J.R."/>
            <person name="Flanigan M.J."/>
            <person name="Edwards N.J."/>
            <person name="Bolanos R."/>
            <person name="Fasulo D."/>
            <person name="Halldorsson B.V."/>
            <person name="Hannenhalli S."/>
            <person name="Turner R."/>
            <person name="Yooseph S."/>
            <person name="Lu F."/>
            <person name="Nusskern D.R."/>
            <person name="Shue B.C."/>
            <person name="Zheng X.H."/>
            <person name="Zhong F."/>
            <person name="Delcher A.L."/>
            <person name="Huson D.H."/>
            <person name="Kravitz S.A."/>
            <person name="Mouchard L."/>
            <person name="Reinert K."/>
            <person name="Remington K.A."/>
            <person name="Clark A.G."/>
            <person name="Waterman M.S."/>
            <person name="Eichler E.E."/>
            <person name="Adams M.D."/>
            <person name="Hunkapiller M.W."/>
            <person name="Myers E.W."/>
            <person name="Venter J.C."/>
        </authorList>
    </citation>
    <scope>NUCLEOTIDE SEQUENCE [LARGE SCALE GENOMIC DNA]</scope>
</reference>
<reference key="7">
    <citation type="journal article" date="2004" name="Genome Res.">
        <title>The status, quality, and expansion of the NIH full-length cDNA project: the Mammalian Gene Collection (MGC).</title>
        <authorList>
            <consortium name="The MGC Project Team"/>
        </authorList>
    </citation>
    <scope>NUCLEOTIDE SEQUENCE [LARGE SCALE MRNA] (ISOFORM 4)</scope>
    <source>
        <tissue>Brain</tissue>
    </source>
</reference>
<reference key="8">
    <citation type="journal article" date="2004" name="Neuron">
        <title>Neuropeptide S: a neuropeptide promoting arousal and anxiolytic-like effects.</title>
        <authorList>
            <person name="Xu Y.-L."/>
            <person name="Reinscheid R.K."/>
            <person name="Huitron-Resendiz S."/>
            <person name="Clark S.D."/>
            <person name="Wang Z."/>
            <person name="Lin S.H."/>
            <person name="Brucher F.A."/>
            <person name="Zeng J."/>
            <person name="Ly N.K."/>
            <person name="Henriksen S.J."/>
            <person name="de Lecea L."/>
            <person name="Civelli O."/>
        </authorList>
    </citation>
    <scope>FUNCTION</scope>
</reference>
<reference key="9">
    <citation type="journal article" date="2005" name="Am. J. Respir. Crit. Care Med.">
        <title>Haplotypes of G protein-coupled receptor 154 are associated with childhood allergy and asthma.</title>
        <authorList>
            <person name="Melen E."/>
            <person name="Bruce S."/>
            <person name="Doekes G."/>
            <person name="Kabesch M."/>
            <person name="Laitinen T."/>
            <person name="Lauener R."/>
            <person name="Lindgren C.M."/>
            <person name="Riedler J."/>
            <person name="Scheynius A."/>
            <person name="van Hage-Hamsten M."/>
            <person name="Kere J."/>
            <person name="Pershagen G."/>
            <person name="Wickman M."/>
            <person name="Nyberg F."/>
        </authorList>
    </citation>
    <scope>INVOLVEMENT IN ASRT2</scope>
</reference>
<reference key="10">
    <citation type="journal article" date="2005" name="Am. J. Respir. Crit. Care Med.">
        <title>G-protein-coupled receptor polymorphisms are associated with asthma in a large German population.</title>
        <authorList>
            <person name="Kormann M.S."/>
            <person name="Carr D."/>
            <person name="Klopp N."/>
            <person name="Illig T."/>
            <person name="Leupold W."/>
            <person name="Fritzsch C."/>
            <person name="Weiland S.K."/>
            <person name="von Mutius E."/>
            <person name="Kabesch M."/>
        </authorList>
    </citation>
    <scope>INVOLVEMENT IN ASRT2</scope>
</reference>
<reference key="11">
    <citation type="journal article" date="2006" name="J. Biol. Chem.">
        <title>Structure-function relationships in the neuropeptide S receptor: molecular consequences of the asthma-associated mutation N107I.</title>
        <authorList>
            <person name="Bernier V."/>
            <person name="Stocco R."/>
            <person name="Bogusky M.J."/>
            <person name="Joyce J.G."/>
            <person name="Parachoniak C."/>
            <person name="Grenier K."/>
            <person name="Arget M."/>
            <person name="Mathieu M.C."/>
            <person name="O'Neill G.P."/>
            <person name="Slipetz D."/>
            <person name="Crackower M.A."/>
            <person name="Tan C.M."/>
            <person name="Therien A.G."/>
        </authorList>
    </citation>
    <scope>CHARACTERIZATION OF VARIANT ILE-107</scope>
    <scope>SUBCELLULAR LOCATION</scope>
    <scope>FUNCTION</scope>
</reference>
<proteinExistence type="evidence at protein level"/>
<comment type="function">
    <text evidence="6 9 10">G-protein coupled receptor for neuropeptide S (NPS) (PubMed:16790440). Promotes mobilization of intracellular Ca(2+) stores (PubMed:16790440). Inhibits cell growth in response to NPS binding (PubMed:15947423). Involved in pathogenesis of asthma and other IgE-mediated diseases.</text>
</comment>
<comment type="subcellular location">
    <molecule>Isoform 1</molecule>
    <subcellularLocation>
        <location evidence="9 10">Cell membrane</location>
        <topology evidence="18">Multi-pass membrane protein</topology>
    </subcellularLocation>
</comment>
<comment type="subcellular location">
    <molecule>Isoform 3</molecule>
    <subcellularLocation>
        <location evidence="9">Cell membrane</location>
        <topology evidence="18">Multi-pass membrane protein</topology>
    </subcellularLocation>
</comment>
<comment type="subcellular location">
    <molecule>Isoform 4</molecule>
    <subcellularLocation>
        <location evidence="9">Cell membrane</location>
        <topology evidence="18">Multi-pass membrane protein</topology>
    </subcellularLocation>
</comment>
<comment type="subcellular location">
    <molecule>Isoform 2</molecule>
    <subcellularLocation>
        <location evidence="9">Cytoplasm</location>
    </subcellularLocation>
</comment>
<comment type="subcellular location">
    <molecule>Isoform 5</molecule>
    <subcellularLocation>
        <location evidence="9">Cytoplasm</location>
    </subcellularLocation>
</comment>
<comment type="subcellular location">
    <molecule>Isoform 6</molecule>
    <subcellularLocation>
        <location evidence="9">Cytoplasm</location>
    </subcellularLocation>
</comment>
<comment type="subcellular location">
    <molecule>Isoform 7</molecule>
    <subcellularLocation>
        <location evidence="9">Cytoplasm</location>
    </subcellularLocation>
</comment>
<comment type="subcellular location">
    <molecule>Isoform 9</molecule>
    <subcellularLocation>
        <location evidence="9">Cytoplasm</location>
    </subcellularLocation>
</comment>
<comment type="alternative products">
    <event type="alternative splicing"/>
    <isoform>
        <id>Q6W5P4-1</id>
        <name>1</name>
        <name>Isoform A</name>
        <sequence type="displayed"/>
    </isoform>
    <isoform>
        <id>Q6W5P4-2</id>
        <name>2</name>
        <name>Isoform F</name>
        <sequence type="described" ref="VSP_016079"/>
    </isoform>
    <isoform>
        <id>Q6W5P4-3</id>
        <name>3</name>
        <name>Isoform G</name>
        <sequence type="described" ref="VSP_016088"/>
    </isoform>
    <isoform>
        <id>Q6W5P4-4</id>
        <name>4</name>
        <name>Isoform B long form</name>
        <sequence type="described" ref="VSP_016089"/>
    </isoform>
    <isoform>
        <id>Q6W5P4-5</id>
        <name>5</name>
        <name>Isoform B short form</name>
        <sequence type="described" ref="VSP_016078 VSP_016089"/>
    </isoform>
    <isoform>
        <id>Q6W5P4-6</id>
        <name>6</name>
        <name>Isoform D</name>
        <sequence type="described" ref="VSP_016080 VSP_016087"/>
    </isoform>
    <isoform>
        <id>Q6W5P4-7</id>
        <name>7</name>
        <name>Isoform E</name>
        <sequence type="described" ref="VSP_016083 VSP_016085"/>
    </isoform>
    <isoform>
        <id>Q6W5P4-8</id>
        <name>8</name>
        <sequence type="described" ref="VSP_016084 VSP_016086"/>
    </isoform>
    <isoform>
        <id>Q6W5P4-9</id>
        <name>9</name>
        <name>Isoform C</name>
        <sequence type="described" ref="VSP_016081 VSP_016082"/>
    </isoform>
</comment>
<comment type="tissue specificity">
    <text evidence="5 9">Isoform 4 is ubiquitous; it is detected in glandular epithelia of bronchus, stomach, small intestine, colon, uterus, esophagus, spleen, kidney, pancreas, prostate and breast. Isoform 1 is detected in uterus, colon and prostate, and in the smooth muscle cell layer in bronchial and arterial walls (at protein level) (PubMed:15947423). Isoform 1 is predominantly expressed in smooth muscle. Isoform 4 is predominantly expressed in epithelial cells. In bronchial biopsies, it is expressed in smooth muscle cells of asthma patients, but not in control patients; whereas in epithelial cells, its expression is consistently stronger in asthma patients.</text>
</comment>
<comment type="disease" evidence="5 7 8">
    <disease id="DI-02880">
        <name>Asthma-related traits 2</name>
        <acronym>ASRT2</acronym>
        <description>Asthma-related traits include clinical symptoms of asthma, such as coughing, wheezing, dyspnea, bronchial hyperresponsiveness as assessed by methacholine challenge test, serum IgE levels, atopy and atopic dermatitis.</description>
        <dbReference type="MIM" id="608584"/>
    </disease>
    <text>Disease susceptibility is associated with variants affecting the gene represented in this entry.</text>
</comment>
<comment type="miscellaneous">
    <text evidence="9">Only isoforms with 7 transmembrane topology (isoform 1, isoform 3 and isoform 4) are transported into the plasma membrane in transfected cells, while the truncated ones retain intracellular compartments.</text>
</comment>
<comment type="similarity">
    <text evidence="2">Belongs to the G-protein coupled receptor 1 family. Vasopressin/oxytocin receptor subfamily.</text>
</comment>
<accession>Q6W5P4</accession>
<accession>A2RTZ4</accession>
<accession>Q2XP58</accession>
<accession>Q56H76</accession>
<accession>Q56H77</accession>
<accession>Q56H78</accession>
<accession>Q6JSL4</accession>
<accession>Q6JSL5</accession>
<accession>Q6JSL6</accession>
<accession>Q6JSL7</accession>
<accession>Q6JSL8</accession>
<accession>Q6W5P3</accession>
<accession>Q6ZMB8</accession>
<gene>
    <name type="primary">NPSR1</name>
    <name type="synonym">GPR154</name>
    <name type="synonym">GPRA</name>
    <name type="synonym">PGR14</name>
</gene>